<gene>
    <name type="primary">lktB</name>
</gene>
<accession>Q93FH0</accession>
<accession>Q934E0</accession>
<organism>
    <name type="scientific">Mannheimia haemolytica</name>
    <name type="common">Pasteurella haemolytica</name>
    <dbReference type="NCBI Taxonomy" id="75985"/>
    <lineage>
        <taxon>Bacteria</taxon>
        <taxon>Pseudomonadati</taxon>
        <taxon>Pseudomonadota</taxon>
        <taxon>Gammaproteobacteria</taxon>
        <taxon>Pasteurellales</taxon>
        <taxon>Pasteurellaceae</taxon>
        <taxon>Mannheimia</taxon>
    </lineage>
</organism>
<reference key="1">
    <citation type="journal article" date="2002" name="J. Bacteriol.">
        <title>Mosaic structure and molecular evolution of the leukotoxin operon (lktCABD) in Mannheimia (Pasteurella) haemolytica, Mannheimia glucosida, and Pasteurella trehalosi.</title>
        <authorList>
            <person name="Davies R.L."/>
            <person name="Campbell S."/>
            <person name="Whittam T.S."/>
        </authorList>
    </citation>
    <scope>NUCLEOTIDE SEQUENCE [GENOMIC DNA]</scope>
    <source>
        <strain>Serotype A2 / PH196</strain>
        <strain>Serotype A2 / PH202</strain>
    </source>
</reference>
<feature type="chain" id="PRO_0000092381" description="Leukotoxin translocation ATP-binding protein LktB">
    <location>
        <begin position="1"/>
        <end position="708"/>
    </location>
</feature>
<feature type="transmembrane region" description="Helical" evidence="4">
    <location>
        <begin position="159"/>
        <end position="179"/>
    </location>
</feature>
<feature type="transmembrane region" description="Helical" evidence="4">
    <location>
        <begin position="192"/>
        <end position="212"/>
    </location>
</feature>
<feature type="transmembrane region" description="Helical" evidence="4">
    <location>
        <begin position="270"/>
        <end position="290"/>
    </location>
</feature>
<feature type="transmembrane region" description="Helical" evidence="4">
    <location>
        <begin position="296"/>
        <end position="316"/>
    </location>
</feature>
<feature type="transmembrane region" description="Helical" evidence="4">
    <location>
        <begin position="389"/>
        <end position="409"/>
    </location>
</feature>
<feature type="domain" description="Peptidase C39" evidence="2">
    <location>
        <begin position="1"/>
        <end position="126"/>
    </location>
</feature>
<feature type="domain" description="ABC transmembrane type-1" evidence="4">
    <location>
        <begin position="155"/>
        <end position="437"/>
    </location>
</feature>
<feature type="domain" description="ABC transporter" evidence="2 3">
    <location>
        <begin position="469"/>
        <end position="704"/>
    </location>
</feature>
<feature type="binding site" evidence="2 3">
    <location>
        <begin position="503"/>
        <end position="510"/>
    </location>
    <ligand>
        <name>ATP</name>
        <dbReference type="ChEBI" id="CHEBI:30616"/>
    </ligand>
</feature>
<feature type="sequence variant" description="In strain: Serotype A2 / PH196.">
    <original>KDA</original>
    <variation>QDS</variation>
    <location>
        <begin position="104"/>
        <end position="106"/>
    </location>
</feature>
<feature type="sequence variant" description="In strain: Serotype A2 / PH196.">
    <original>K</original>
    <variation>Q</variation>
    <location>
        <position position="466"/>
    </location>
</feature>
<feature type="sequence variant" description="In strain: Serotype A2 / PH196.">
    <original>S</original>
    <variation>A</variation>
    <location>
        <position position="470"/>
    </location>
</feature>
<feature type="sequence variant" description="In strain: Serotype A2 /PH196.">
    <original>RQ</original>
    <variation>KK</variation>
    <location>
        <begin position="494"/>
        <end position="495"/>
    </location>
</feature>
<feature type="sequence variant" description="In strain: Serotype A2 / PH196.">
    <original>D</original>
    <variation>E</variation>
    <location>
        <position position="568"/>
    </location>
</feature>
<feature type="sequence variant" description="In strain: Serotype A2 / PH196.">
    <original>P</original>
    <variation>S</variation>
    <location>
        <position position="572"/>
    </location>
</feature>
<protein>
    <recommendedName>
        <fullName>Leukotoxin translocation ATP-binding protein LktB</fullName>
        <ecNumber>7.4.2.5</ecNumber>
    </recommendedName>
</protein>
<evidence type="ECO:0000250" key="1"/>
<evidence type="ECO:0000255" key="2">
    <source>
        <dbReference type="PROSITE-ProRule" id="PRU00362"/>
    </source>
</evidence>
<evidence type="ECO:0000255" key="3">
    <source>
        <dbReference type="PROSITE-ProRule" id="PRU00434"/>
    </source>
</evidence>
<evidence type="ECO:0000255" key="4">
    <source>
        <dbReference type="PROSITE-ProRule" id="PRU00441"/>
    </source>
</evidence>
<evidence type="ECO:0000305" key="5"/>
<name>LKB2A_MANHA</name>
<keyword id="KW-0067">ATP-binding</keyword>
<keyword id="KW-0997">Cell inner membrane</keyword>
<keyword id="KW-1003">Cell membrane</keyword>
<keyword id="KW-0472">Membrane</keyword>
<keyword id="KW-0547">Nucleotide-binding</keyword>
<keyword id="KW-1278">Translocase</keyword>
<keyword id="KW-0812">Transmembrane</keyword>
<keyword id="KW-1133">Transmembrane helix</keyword>
<keyword id="KW-0813">Transport</keyword>
<proteinExistence type="inferred from homology"/>
<comment type="function">
    <text evidence="5">Part of the ABC transporter complex LktBD involved in leukotoxin export. Transmembrane domains (TMD) form a pore in the inner membrane and the ATP-binding domain (NBD) is responsible for energy generation (Probable).</text>
</comment>
<comment type="catalytic activity">
    <reaction>
        <text>ATP + H2O + proteinSide 1 = ADP + phosphate + proteinSide 2.</text>
        <dbReference type="EC" id="7.4.2.5"/>
    </reaction>
</comment>
<comment type="subunit">
    <text evidence="1">Homodimer.</text>
</comment>
<comment type="subcellular location">
    <subcellularLocation>
        <location evidence="5">Cell inner membrane</location>
        <topology evidence="5">Multi-pass membrane protein</topology>
    </subcellularLocation>
</comment>
<comment type="domain">
    <text>In LktB the peptidase C39 domain, the ATP-binding domain (NBD) and the transmembrane domain (TMD) are fused.</text>
</comment>
<comment type="similarity">
    <text evidence="5">Belongs to the ABC transporter superfamily. Protein-1 exporter (TC 3.A.1.109) family.</text>
</comment>
<comment type="caution">
    <text evidence="5">Leu-10 is present instead of the conserved Cys which is expected to be the active site residue of peptidase C39. Thus this protein is presumed to be without peptidase activity.</text>
</comment>
<dbReference type="EC" id="7.4.2.5"/>
<dbReference type="EMBL" id="AF314512">
    <property type="protein sequence ID" value="AAL12785.1"/>
    <property type="molecule type" value="Genomic_DNA"/>
</dbReference>
<dbReference type="EMBL" id="AF314513">
    <property type="protein sequence ID" value="AAL12788.1"/>
    <property type="molecule type" value="Genomic_DNA"/>
</dbReference>
<dbReference type="RefSeq" id="WP_021279473.1">
    <property type="nucleotide sequence ID" value="NZ_VAHY01000084.1"/>
</dbReference>
<dbReference type="RefSeq" id="WP_032844367.1">
    <property type="nucleotide sequence ID" value="NZ_VAIL01000117.1"/>
</dbReference>
<dbReference type="SMR" id="Q93FH0"/>
<dbReference type="PATRIC" id="fig|75985.43.peg.581"/>
<dbReference type="GO" id="GO:0005886">
    <property type="term" value="C:plasma membrane"/>
    <property type="evidence" value="ECO:0007669"/>
    <property type="project" value="UniProtKB-SubCell"/>
</dbReference>
<dbReference type="GO" id="GO:0030256">
    <property type="term" value="C:type I protein secretion system complex"/>
    <property type="evidence" value="ECO:0007669"/>
    <property type="project" value="InterPro"/>
</dbReference>
<dbReference type="GO" id="GO:0140359">
    <property type="term" value="F:ABC-type transporter activity"/>
    <property type="evidence" value="ECO:0007669"/>
    <property type="project" value="InterPro"/>
</dbReference>
<dbReference type="GO" id="GO:0005524">
    <property type="term" value="F:ATP binding"/>
    <property type="evidence" value="ECO:0007669"/>
    <property type="project" value="UniProtKB-KW"/>
</dbReference>
<dbReference type="GO" id="GO:0016887">
    <property type="term" value="F:ATP hydrolysis activity"/>
    <property type="evidence" value="ECO:0007669"/>
    <property type="project" value="InterPro"/>
</dbReference>
<dbReference type="GO" id="GO:0034040">
    <property type="term" value="F:ATPase-coupled lipid transmembrane transporter activity"/>
    <property type="evidence" value="ECO:0007669"/>
    <property type="project" value="TreeGrafter"/>
</dbReference>
<dbReference type="GO" id="GO:0030253">
    <property type="term" value="P:protein secretion by the type I secretion system"/>
    <property type="evidence" value="ECO:0007669"/>
    <property type="project" value="InterPro"/>
</dbReference>
<dbReference type="GO" id="GO:0006508">
    <property type="term" value="P:proteolysis"/>
    <property type="evidence" value="ECO:0007669"/>
    <property type="project" value="InterPro"/>
</dbReference>
<dbReference type="CDD" id="cd18588">
    <property type="entry name" value="ABC_6TM_CyaB_HlyB_like"/>
    <property type="match status" value="1"/>
</dbReference>
<dbReference type="CDD" id="cd03252">
    <property type="entry name" value="ABCC_Hemolysin"/>
    <property type="match status" value="1"/>
</dbReference>
<dbReference type="CDD" id="cd02417">
    <property type="entry name" value="Peptidase_C39_likeA"/>
    <property type="match status" value="1"/>
</dbReference>
<dbReference type="FunFam" id="3.40.50.300:FF:000299">
    <property type="entry name" value="ABC transporter ATP-binding protein/permease"/>
    <property type="match status" value="1"/>
</dbReference>
<dbReference type="FunFam" id="1.20.1560.10:FF:000056">
    <property type="entry name" value="Alpha-hemolysin translocation ATP-binding protein HlyB"/>
    <property type="match status" value="1"/>
</dbReference>
<dbReference type="Gene3D" id="1.20.1560.10">
    <property type="entry name" value="ABC transporter type 1, transmembrane domain"/>
    <property type="match status" value="1"/>
</dbReference>
<dbReference type="Gene3D" id="3.90.70.10">
    <property type="entry name" value="Cysteine proteinases"/>
    <property type="match status" value="1"/>
</dbReference>
<dbReference type="Gene3D" id="3.40.50.300">
    <property type="entry name" value="P-loop containing nucleotide triphosphate hydrolases"/>
    <property type="match status" value="1"/>
</dbReference>
<dbReference type="InterPro" id="IPR003593">
    <property type="entry name" value="AAA+_ATPase"/>
</dbReference>
<dbReference type="InterPro" id="IPR011527">
    <property type="entry name" value="ABC1_TM_dom"/>
</dbReference>
<dbReference type="InterPro" id="IPR036640">
    <property type="entry name" value="ABC1_TM_sf"/>
</dbReference>
<dbReference type="InterPro" id="IPR003439">
    <property type="entry name" value="ABC_transporter-like_ATP-bd"/>
</dbReference>
<dbReference type="InterPro" id="IPR017871">
    <property type="entry name" value="ABC_transporter-like_CS"/>
</dbReference>
<dbReference type="InterPro" id="IPR010132">
    <property type="entry name" value="ATPase_T1SS_HlyB"/>
</dbReference>
<dbReference type="InterPro" id="IPR027417">
    <property type="entry name" value="P-loop_NTPase"/>
</dbReference>
<dbReference type="InterPro" id="IPR005074">
    <property type="entry name" value="Peptidase_C39"/>
</dbReference>
<dbReference type="InterPro" id="IPR039395">
    <property type="entry name" value="Peptidase_C39-like_A"/>
</dbReference>
<dbReference type="InterPro" id="IPR039421">
    <property type="entry name" value="Type_1_exporter"/>
</dbReference>
<dbReference type="NCBIfam" id="TIGR01846">
    <property type="entry name" value="type_I_sec_HlyB"/>
    <property type="match status" value="1"/>
</dbReference>
<dbReference type="PANTHER" id="PTHR24221">
    <property type="entry name" value="ATP-BINDING CASSETTE SUB-FAMILY B"/>
    <property type="match status" value="1"/>
</dbReference>
<dbReference type="PANTHER" id="PTHR24221:SF647">
    <property type="entry name" value="BLL6336 PROTEIN"/>
    <property type="match status" value="1"/>
</dbReference>
<dbReference type="Pfam" id="PF00664">
    <property type="entry name" value="ABC_membrane"/>
    <property type="match status" value="1"/>
</dbReference>
<dbReference type="Pfam" id="PF00005">
    <property type="entry name" value="ABC_tran"/>
    <property type="match status" value="1"/>
</dbReference>
<dbReference type="Pfam" id="PF03412">
    <property type="entry name" value="Peptidase_C39"/>
    <property type="match status" value="1"/>
</dbReference>
<dbReference type="SMART" id="SM00382">
    <property type="entry name" value="AAA"/>
    <property type="match status" value="1"/>
</dbReference>
<dbReference type="SUPFAM" id="SSF90123">
    <property type="entry name" value="ABC transporter transmembrane region"/>
    <property type="match status" value="1"/>
</dbReference>
<dbReference type="SUPFAM" id="SSF52540">
    <property type="entry name" value="P-loop containing nucleoside triphosphate hydrolases"/>
    <property type="match status" value="1"/>
</dbReference>
<dbReference type="PROSITE" id="PS50929">
    <property type="entry name" value="ABC_TM1F"/>
    <property type="match status" value="1"/>
</dbReference>
<dbReference type="PROSITE" id="PS00211">
    <property type="entry name" value="ABC_TRANSPORTER_1"/>
    <property type="match status" value="1"/>
</dbReference>
<dbReference type="PROSITE" id="PS50893">
    <property type="entry name" value="ABC_TRANSPORTER_2"/>
    <property type="match status" value="1"/>
</dbReference>
<dbReference type="PROSITE" id="PS50990">
    <property type="entry name" value="PEPTIDASE_C39"/>
    <property type="match status" value="1"/>
</dbReference>
<sequence>MEANHQRNDLGLVALTMLAQYHNISLNPEEIKHKFDLDGKGLSLTAWLLAAKSLALKAKHIKKEVSRLHLVNLPALVWQDNGKHFLLVKVDTDNNRYLTYDLEKDAPQILSQDEFEACYQGQLILVTSRASVVGQLAKFDFTWFIPAVIKYRKIFLETLIVSIFLQIFALITPLFFQVVMDKVLVHRGFSTLNIITVALAIVIIFEIVLSGLRTYVFSHSTSRIDVELGAKLFRHLLSLPISYFENRRVGDTVARVRELDQIRNFLTGQALTSVLDLLFSFIFFAVMWYYSPKLTLVILGSLPCYILWSIFISPILRRRLDDKFARSADNQAFLVESVTAINMIKAMAVAPQMTDTWDKQLASYVSSSFRVTVLATIGQQGVQLIQKTVMVINLWLGAHLVISGDLSIGQLIAFNMLSGQVIAPVIRLAQLWQDFQQVGISVTRLGDVLNSPTEQYQGKLSLPEIKGDISFKNIRFRYKPDAPTILNNVNLEIRQGEVIGIVGRSGSGKSTLTKLLQRFYIPENGQVLIDGHDLALADPNWLRRQIGVVLQDNVLLNRSIRENIALSDPGMPMERVIYAAKLAGAHDFISELREGYNTIVGEQGAGLSGGQRQRIAIARALVNNPKILIFDEATSALDYESEHIIMQNMQKICQGRTVILIAHRLSTVKNADRIIVMEKGEIVEQGKHHELLQNSNGLYSYLHQLQLN</sequence>